<organism>
    <name type="scientific">Salmonella arizonae (strain ATCC BAA-731 / CDC346-86 / RSK2980)</name>
    <dbReference type="NCBI Taxonomy" id="41514"/>
    <lineage>
        <taxon>Bacteria</taxon>
        <taxon>Pseudomonadati</taxon>
        <taxon>Pseudomonadota</taxon>
        <taxon>Gammaproteobacteria</taxon>
        <taxon>Enterobacterales</taxon>
        <taxon>Enterobacteriaceae</taxon>
        <taxon>Salmonella</taxon>
    </lineage>
</organism>
<keyword id="KW-0050">Antiport</keyword>
<keyword id="KW-0997">Cell inner membrane</keyword>
<keyword id="KW-1003">Cell membrane</keyword>
<keyword id="KW-0406">Ion transport</keyword>
<keyword id="KW-0472">Membrane</keyword>
<keyword id="KW-1185">Reference proteome</keyword>
<keyword id="KW-0915">Sodium</keyword>
<keyword id="KW-0739">Sodium transport</keyword>
<keyword id="KW-0812">Transmembrane</keyword>
<keyword id="KW-1133">Transmembrane helix</keyword>
<keyword id="KW-0813">Transport</keyword>
<name>NHAA_SALAR</name>
<sequence>MKHLQRFFSSDASGGIILIIAAALAMLMANMGATSGWYHHFLETPVQLRVGALEINKNMLLWINDALMAVFFLLIGLEVKRELLQGSLASLRQAVFPVIAAIGGMIVPALLYLAFNYSDPVTREGWAIPAATDIAFALGVLALLGSRVPLALKIFLMALAIIDDLGAIIIIALFYTSDLSIVSLGVAAFAIVVLALLNLCGVRRTGVYILVGAILWTAVLKSGVHATLAGVIVGFFIPLKEKHGRSPAKRLEHILHPWVAYLILPLFAFANAGVSLQGVTIDGLTSMLPLGIIAGLLIGKPLGISLFCWLALRFKLAHLPQGTTYQQIMAVGILCGIGFTMSIFIASLAFGNVDPALINWAKLGILIGSLLSAVVGYSWLRARLNAPA</sequence>
<gene>
    <name evidence="1" type="primary">nhaA</name>
    <name type="ordered locus">SARI_02952</name>
</gene>
<proteinExistence type="inferred from homology"/>
<comment type="function">
    <text evidence="1">Na(+)/H(+) antiporter that extrudes sodium in exchange for external protons.</text>
</comment>
<comment type="catalytic activity">
    <reaction evidence="1">
        <text>Na(+)(in) + 2 H(+)(out) = Na(+)(out) + 2 H(+)(in)</text>
        <dbReference type="Rhea" id="RHEA:29251"/>
        <dbReference type="ChEBI" id="CHEBI:15378"/>
        <dbReference type="ChEBI" id="CHEBI:29101"/>
    </reaction>
    <physiologicalReaction direction="left-to-right" evidence="1">
        <dbReference type="Rhea" id="RHEA:29252"/>
    </physiologicalReaction>
</comment>
<comment type="subcellular location">
    <subcellularLocation>
        <location evidence="1">Cell inner membrane</location>
        <topology evidence="1">Multi-pass membrane protein</topology>
    </subcellularLocation>
</comment>
<comment type="similarity">
    <text evidence="1">Belongs to the NhaA Na(+)/H(+) (TC 2.A.33) antiporter family.</text>
</comment>
<evidence type="ECO:0000255" key="1">
    <source>
        <dbReference type="HAMAP-Rule" id="MF_01844"/>
    </source>
</evidence>
<protein>
    <recommendedName>
        <fullName evidence="1">Na(+)/H(+) antiporter NhaA</fullName>
    </recommendedName>
    <alternativeName>
        <fullName evidence="1">Sodium/proton antiporter NhaA</fullName>
    </alternativeName>
</protein>
<accession>A9MR50</accession>
<dbReference type="EMBL" id="CP000880">
    <property type="protein sequence ID" value="ABX22798.1"/>
    <property type="molecule type" value="Genomic_DNA"/>
</dbReference>
<dbReference type="SMR" id="A9MR50"/>
<dbReference type="STRING" id="41514.SARI_02952"/>
<dbReference type="KEGG" id="ses:SARI_02952"/>
<dbReference type="HOGENOM" id="CLU_015803_1_0_6"/>
<dbReference type="Proteomes" id="UP000002084">
    <property type="component" value="Chromosome"/>
</dbReference>
<dbReference type="GO" id="GO:0005886">
    <property type="term" value="C:plasma membrane"/>
    <property type="evidence" value="ECO:0007669"/>
    <property type="project" value="UniProtKB-SubCell"/>
</dbReference>
<dbReference type="GO" id="GO:0015385">
    <property type="term" value="F:sodium:proton antiporter activity"/>
    <property type="evidence" value="ECO:0007669"/>
    <property type="project" value="TreeGrafter"/>
</dbReference>
<dbReference type="GO" id="GO:0006885">
    <property type="term" value="P:regulation of pH"/>
    <property type="evidence" value="ECO:0007669"/>
    <property type="project" value="InterPro"/>
</dbReference>
<dbReference type="FunFam" id="1.20.1530.10:FF:000001">
    <property type="entry name" value="Na(+)/H(+) antiporter NhaA"/>
    <property type="match status" value="1"/>
</dbReference>
<dbReference type="Gene3D" id="1.20.1530.10">
    <property type="entry name" value="Na+/H+ antiporter like domain"/>
    <property type="match status" value="1"/>
</dbReference>
<dbReference type="HAMAP" id="MF_01844">
    <property type="entry name" value="NhaA"/>
    <property type="match status" value="1"/>
</dbReference>
<dbReference type="InterPro" id="IPR023171">
    <property type="entry name" value="Na/H_antiporter_dom_sf"/>
</dbReference>
<dbReference type="InterPro" id="IPR004670">
    <property type="entry name" value="NhaA"/>
</dbReference>
<dbReference type="NCBIfam" id="TIGR00773">
    <property type="entry name" value="NhaA"/>
    <property type="match status" value="1"/>
</dbReference>
<dbReference type="NCBIfam" id="NF007111">
    <property type="entry name" value="PRK09560.1"/>
    <property type="match status" value="1"/>
</dbReference>
<dbReference type="NCBIfam" id="NF007112">
    <property type="entry name" value="PRK09561.1"/>
    <property type="match status" value="1"/>
</dbReference>
<dbReference type="PANTHER" id="PTHR30341:SF0">
    <property type="entry name" value="NA(+)_H(+) ANTIPORTER NHAA"/>
    <property type="match status" value="1"/>
</dbReference>
<dbReference type="PANTHER" id="PTHR30341">
    <property type="entry name" value="SODIUM ION/PROTON ANTIPORTER NHAA-RELATED"/>
    <property type="match status" value="1"/>
</dbReference>
<dbReference type="Pfam" id="PF06965">
    <property type="entry name" value="Na_H_antiport_1"/>
    <property type="match status" value="1"/>
</dbReference>
<reference key="1">
    <citation type="submission" date="2007-11" db="EMBL/GenBank/DDBJ databases">
        <authorList>
            <consortium name="The Salmonella enterica serovar Arizonae Genome Sequencing Project"/>
            <person name="McClelland M."/>
            <person name="Sanderson E.K."/>
            <person name="Porwollik S."/>
            <person name="Spieth J."/>
            <person name="Clifton W.S."/>
            <person name="Fulton R."/>
            <person name="Chunyan W."/>
            <person name="Wollam A."/>
            <person name="Shah N."/>
            <person name="Pepin K."/>
            <person name="Bhonagiri V."/>
            <person name="Nash W."/>
            <person name="Johnson M."/>
            <person name="Thiruvilangam P."/>
            <person name="Wilson R."/>
        </authorList>
    </citation>
    <scope>NUCLEOTIDE SEQUENCE [LARGE SCALE GENOMIC DNA]</scope>
    <source>
        <strain>ATCC BAA-731 / CDC346-86 / RSK2980</strain>
    </source>
</reference>
<feature type="chain" id="PRO_0000334412" description="Na(+)/H(+) antiporter NhaA">
    <location>
        <begin position="1"/>
        <end position="388"/>
    </location>
</feature>
<feature type="transmembrane region" description="Helical" evidence="1">
    <location>
        <begin position="14"/>
        <end position="34"/>
    </location>
</feature>
<feature type="transmembrane region" description="Helical" evidence="1">
    <location>
        <begin position="59"/>
        <end position="79"/>
    </location>
</feature>
<feature type="transmembrane region" description="Helical" evidence="1">
    <location>
        <begin position="95"/>
        <end position="115"/>
    </location>
</feature>
<feature type="transmembrane region" description="Helical" evidence="1">
    <location>
        <begin position="125"/>
        <end position="145"/>
    </location>
</feature>
<feature type="transmembrane region" description="Helical" evidence="1">
    <location>
        <begin position="154"/>
        <end position="174"/>
    </location>
</feature>
<feature type="transmembrane region" description="Helical" evidence="1">
    <location>
        <begin position="179"/>
        <end position="199"/>
    </location>
</feature>
<feature type="transmembrane region" description="Helical" evidence="1">
    <location>
        <begin position="219"/>
        <end position="239"/>
    </location>
</feature>
<feature type="transmembrane region" description="Helical" evidence="1">
    <location>
        <begin position="254"/>
        <end position="274"/>
    </location>
</feature>
<feature type="transmembrane region" description="Helical" evidence="1">
    <location>
        <begin position="292"/>
        <end position="312"/>
    </location>
</feature>
<feature type="transmembrane region" description="Helical" evidence="1">
    <location>
        <begin position="328"/>
        <end position="348"/>
    </location>
</feature>
<feature type="transmembrane region" description="Helical" evidence="1">
    <location>
        <begin position="356"/>
        <end position="376"/>
    </location>
</feature>